<organism>
    <name type="scientific">Escherichia coli O127:H6 (strain E2348/69 / EPEC)</name>
    <dbReference type="NCBI Taxonomy" id="574521"/>
    <lineage>
        <taxon>Bacteria</taxon>
        <taxon>Pseudomonadati</taxon>
        <taxon>Pseudomonadota</taxon>
        <taxon>Gammaproteobacteria</taxon>
        <taxon>Enterobacterales</taxon>
        <taxon>Enterobacteriaceae</taxon>
        <taxon>Escherichia</taxon>
    </lineage>
</organism>
<dbReference type="EC" id="3.5.1.n3" evidence="1"/>
<dbReference type="EMBL" id="FM180568">
    <property type="protein sequence ID" value="CAS09948.1"/>
    <property type="molecule type" value="Genomic_DNA"/>
</dbReference>
<dbReference type="RefSeq" id="WP_000169712.1">
    <property type="nucleotide sequence ID" value="NC_011601.1"/>
</dbReference>
<dbReference type="SMR" id="B7UFR8"/>
<dbReference type="KEGG" id="ecg:E2348C_2400"/>
<dbReference type="HOGENOM" id="CLU_084199_0_0_6"/>
<dbReference type="UniPathway" id="UPA00030"/>
<dbReference type="UniPathway" id="UPA00036">
    <property type="reaction ID" value="UER00496"/>
</dbReference>
<dbReference type="Proteomes" id="UP000008205">
    <property type="component" value="Chromosome"/>
</dbReference>
<dbReference type="GO" id="GO:0016020">
    <property type="term" value="C:membrane"/>
    <property type="evidence" value="ECO:0007669"/>
    <property type="project" value="GOC"/>
</dbReference>
<dbReference type="GO" id="GO:0016811">
    <property type="term" value="F:hydrolase activity, acting on carbon-nitrogen (but not peptide) bonds, in linear amides"/>
    <property type="evidence" value="ECO:0007669"/>
    <property type="project" value="UniProtKB-UniRule"/>
</dbReference>
<dbReference type="GO" id="GO:0036108">
    <property type="term" value="P:4-amino-4-deoxy-alpha-L-arabinopyranosyl undecaprenyl phosphate biosynthetic process"/>
    <property type="evidence" value="ECO:0007669"/>
    <property type="project" value="UniProtKB-UniRule"/>
</dbReference>
<dbReference type="GO" id="GO:0009245">
    <property type="term" value="P:lipid A biosynthetic process"/>
    <property type="evidence" value="ECO:0007669"/>
    <property type="project" value="UniProtKB-UniRule"/>
</dbReference>
<dbReference type="GO" id="GO:0009103">
    <property type="term" value="P:lipopolysaccharide biosynthetic process"/>
    <property type="evidence" value="ECO:0007669"/>
    <property type="project" value="UniProtKB-UniRule"/>
</dbReference>
<dbReference type="GO" id="GO:0046677">
    <property type="term" value="P:response to antibiotic"/>
    <property type="evidence" value="ECO:0007669"/>
    <property type="project" value="UniProtKB-KW"/>
</dbReference>
<dbReference type="CDD" id="cd10939">
    <property type="entry name" value="CE4_ArnD"/>
    <property type="match status" value="1"/>
</dbReference>
<dbReference type="Gene3D" id="3.20.20.370">
    <property type="entry name" value="Glycoside hydrolase/deacetylase"/>
    <property type="match status" value="1"/>
</dbReference>
<dbReference type="HAMAP" id="MF_01870">
    <property type="entry name" value="ArnD"/>
    <property type="match status" value="1"/>
</dbReference>
<dbReference type="InterPro" id="IPR023557">
    <property type="entry name" value="ArnD"/>
</dbReference>
<dbReference type="InterPro" id="IPR011330">
    <property type="entry name" value="Glyco_hydro/deAcase_b/a-brl"/>
</dbReference>
<dbReference type="InterPro" id="IPR002509">
    <property type="entry name" value="NODB_dom"/>
</dbReference>
<dbReference type="InterPro" id="IPR050248">
    <property type="entry name" value="Polysacc_deacetylase_ArnD"/>
</dbReference>
<dbReference type="NCBIfam" id="NF011923">
    <property type="entry name" value="PRK15394.1"/>
    <property type="match status" value="1"/>
</dbReference>
<dbReference type="PANTHER" id="PTHR10587:SF137">
    <property type="entry name" value="4-DEOXY-4-FORMAMIDO-L-ARABINOSE-PHOSPHOUNDECAPRENOL DEFORMYLASE ARND-RELATED"/>
    <property type="match status" value="1"/>
</dbReference>
<dbReference type="PANTHER" id="PTHR10587">
    <property type="entry name" value="GLYCOSYL TRANSFERASE-RELATED"/>
    <property type="match status" value="1"/>
</dbReference>
<dbReference type="Pfam" id="PF01522">
    <property type="entry name" value="Polysacc_deac_1"/>
    <property type="match status" value="1"/>
</dbReference>
<dbReference type="SUPFAM" id="SSF88713">
    <property type="entry name" value="Glycoside hydrolase/deacetylase"/>
    <property type="match status" value="1"/>
</dbReference>
<dbReference type="PROSITE" id="PS51677">
    <property type="entry name" value="NODB"/>
    <property type="match status" value="1"/>
</dbReference>
<gene>
    <name evidence="1" type="primary">arnD</name>
    <name type="ordered locus">E2348C_2400</name>
</gene>
<accession>B7UFR8</accession>
<keyword id="KW-0046">Antibiotic resistance</keyword>
<keyword id="KW-0378">Hydrolase</keyword>
<keyword id="KW-0441">Lipid A biosynthesis</keyword>
<keyword id="KW-0444">Lipid biosynthesis</keyword>
<keyword id="KW-0443">Lipid metabolism</keyword>
<keyword id="KW-0448">Lipopolysaccharide biosynthesis</keyword>
<keyword id="KW-1185">Reference proteome</keyword>
<proteinExistence type="inferred from homology"/>
<feature type="chain" id="PRO_0000383501" description="Probable 4-deoxy-4-formamido-L-arabinose-phosphoundecaprenol deformylase ArnD">
    <location>
        <begin position="1"/>
        <end position="296"/>
    </location>
</feature>
<feature type="domain" description="NodB homology" evidence="1">
    <location>
        <begin position="2"/>
        <end position="260"/>
    </location>
</feature>
<name>ARND_ECO27</name>
<evidence type="ECO:0000255" key="1">
    <source>
        <dbReference type="HAMAP-Rule" id="MF_01870"/>
    </source>
</evidence>
<protein>
    <recommendedName>
        <fullName evidence="1">Probable 4-deoxy-4-formamido-L-arabinose-phosphoundecaprenol deformylase ArnD</fullName>
        <ecNumber evidence="1">3.5.1.n3</ecNumber>
    </recommendedName>
</protein>
<reference key="1">
    <citation type="journal article" date="2009" name="J. Bacteriol.">
        <title>Complete genome sequence and comparative genome analysis of enteropathogenic Escherichia coli O127:H6 strain E2348/69.</title>
        <authorList>
            <person name="Iguchi A."/>
            <person name="Thomson N.R."/>
            <person name="Ogura Y."/>
            <person name="Saunders D."/>
            <person name="Ooka T."/>
            <person name="Henderson I.R."/>
            <person name="Harris D."/>
            <person name="Asadulghani M."/>
            <person name="Kurokawa K."/>
            <person name="Dean P."/>
            <person name="Kenny B."/>
            <person name="Quail M.A."/>
            <person name="Thurston S."/>
            <person name="Dougan G."/>
            <person name="Hayashi T."/>
            <person name="Parkhill J."/>
            <person name="Frankel G."/>
        </authorList>
    </citation>
    <scope>NUCLEOTIDE SEQUENCE [LARGE SCALE GENOMIC DNA]</scope>
    <source>
        <strain>E2348/69 / EPEC</strain>
    </source>
</reference>
<comment type="function">
    <text evidence="1">Catalyzes the deformylation of 4-deoxy-4-formamido-L-arabinose-phosphoundecaprenol to 4-amino-4-deoxy-L-arabinose-phosphoundecaprenol. The modified arabinose is attached to lipid A and is required for resistance to polymyxin and cationic antimicrobial peptides.</text>
</comment>
<comment type="catalytic activity">
    <reaction evidence="1">
        <text>4-deoxy-4-formamido-alpha-L-arabinopyranosyl di-trans,octa-cis-undecaprenyl phosphate + H2O = 4-amino-4-deoxy-alpha-L-arabinopyranosyl di-trans,octa-cis-undecaprenyl phosphate + formate</text>
        <dbReference type="Rhea" id="RHEA:27734"/>
        <dbReference type="ChEBI" id="CHEBI:15377"/>
        <dbReference type="ChEBI" id="CHEBI:15740"/>
        <dbReference type="ChEBI" id="CHEBI:58909"/>
        <dbReference type="ChEBI" id="CHEBI:60463"/>
        <dbReference type="EC" id="3.5.1.n3"/>
    </reaction>
</comment>
<comment type="pathway">
    <text evidence="1">Glycolipid biosynthesis; 4-amino-4-deoxy-alpha-L-arabinose undecaprenyl phosphate biosynthesis; 4-amino-4-deoxy-alpha-L-arabinose undecaprenyl phosphate from UDP-4-deoxy-4-formamido-beta-L-arabinose and undecaprenyl phosphate: step 2/2.</text>
</comment>
<comment type="pathway">
    <text evidence="1">Bacterial outer membrane biogenesis; lipopolysaccharide biosynthesis.</text>
</comment>
<comment type="similarity">
    <text evidence="1">Belongs to the polysaccharide deacetylase family. ArnD deformylase subfamily.</text>
</comment>
<sequence length="296" mass="33004">MTKVGLRIDVDTFRGTREGVPRLLEILSKHNIQASIFFSVGPDNMGRHLWRLVKPQFLWKMLRSNAASLYGWDILLAGTAWPGKEIGHANADIIREAAKHHEVGLHAWDHHAWQAHSGNWDRQTMIDDIARGLRTLEEIIGQPVTCSAAAGWRADQQVIEAKEAFHLRYNSDCRGAMPFRPLLESGTPGTAQIPVTLPTWDEVIGRDVKAEDFNGWLLNRIQRDKGTPVYTIHAEVEGCAYQHNFVDLLKRAAQEGVTFCPLSELLSGTLPLGQVVRGNIAGREGWLGCQQIAGSH</sequence>